<protein>
    <recommendedName>
        <fullName evidence="1">UPF0316 protein NWMN_1849</fullName>
    </recommendedName>
</protein>
<gene>
    <name type="ordered locus">NWMN_1849</name>
</gene>
<comment type="subcellular location">
    <subcellularLocation>
        <location evidence="1">Cell membrane</location>
        <topology evidence="1">Multi-pass membrane protein</topology>
    </subcellularLocation>
</comment>
<comment type="similarity">
    <text evidence="1">Belongs to the UPF0316 family.</text>
</comment>
<sequence length="200" mass="22955">MSFVTENPWLMVLTIFIINVCYVTFLTMRTILTLKGYRYIAASVSFLEVLVYIVGLGLVMSNLDHIQNIIAYAFGFSIGIIVGMKIEEKLALGYTVVNVTSAEYELDLPNELRNLGYGVTHYAAFGRDGSRMVMQILTPRKYERKLMDTIKNLDPKAFIIAYEPRNIHGGFWTKGIRRRKLKDYEPEELESVVEHEIQSK</sequence>
<evidence type="ECO:0000255" key="1">
    <source>
        <dbReference type="HAMAP-Rule" id="MF_01515"/>
    </source>
</evidence>
<keyword id="KW-1003">Cell membrane</keyword>
<keyword id="KW-0472">Membrane</keyword>
<keyword id="KW-0812">Transmembrane</keyword>
<keyword id="KW-1133">Transmembrane helix</keyword>
<feature type="chain" id="PRO_1000073535" description="UPF0316 protein NWMN_1849">
    <location>
        <begin position="1"/>
        <end position="200"/>
    </location>
</feature>
<feature type="transmembrane region" description="Helical" evidence="1">
    <location>
        <begin position="8"/>
        <end position="28"/>
    </location>
</feature>
<feature type="transmembrane region" description="Helical" evidence="1">
    <location>
        <begin position="40"/>
        <end position="60"/>
    </location>
</feature>
<feature type="transmembrane region" description="Helical" evidence="1">
    <location>
        <begin position="66"/>
        <end position="86"/>
    </location>
</feature>
<organism>
    <name type="scientific">Staphylococcus aureus (strain Newman)</name>
    <dbReference type="NCBI Taxonomy" id="426430"/>
    <lineage>
        <taxon>Bacteria</taxon>
        <taxon>Bacillati</taxon>
        <taxon>Bacillota</taxon>
        <taxon>Bacilli</taxon>
        <taxon>Bacillales</taxon>
        <taxon>Staphylococcaceae</taxon>
        <taxon>Staphylococcus</taxon>
    </lineage>
</organism>
<proteinExistence type="inferred from homology"/>
<dbReference type="EMBL" id="AP009351">
    <property type="protein sequence ID" value="BAF68121.1"/>
    <property type="molecule type" value="Genomic_DNA"/>
</dbReference>
<dbReference type="RefSeq" id="WP_000011542.1">
    <property type="nucleotide sequence ID" value="NZ_JBBIAE010000010.1"/>
</dbReference>
<dbReference type="SMR" id="A6QID9"/>
<dbReference type="KEGG" id="sae:NWMN_1849"/>
<dbReference type="HOGENOM" id="CLU_106166_1_0_9"/>
<dbReference type="Proteomes" id="UP000006386">
    <property type="component" value="Chromosome"/>
</dbReference>
<dbReference type="GO" id="GO:0005886">
    <property type="term" value="C:plasma membrane"/>
    <property type="evidence" value="ECO:0007669"/>
    <property type="project" value="UniProtKB-SubCell"/>
</dbReference>
<dbReference type="CDD" id="cd16381">
    <property type="entry name" value="YitT_C_like_1"/>
    <property type="match status" value="1"/>
</dbReference>
<dbReference type="HAMAP" id="MF_01515">
    <property type="entry name" value="UPF0316"/>
    <property type="match status" value="1"/>
</dbReference>
<dbReference type="InterPro" id="IPR019264">
    <property type="entry name" value="DUF2179"/>
</dbReference>
<dbReference type="InterPro" id="IPR044035">
    <property type="entry name" value="DUF5698"/>
</dbReference>
<dbReference type="InterPro" id="IPR022930">
    <property type="entry name" value="UPF0316"/>
</dbReference>
<dbReference type="NCBIfam" id="NF003190">
    <property type="entry name" value="PRK04164.1-1"/>
    <property type="match status" value="1"/>
</dbReference>
<dbReference type="NCBIfam" id="NF003194">
    <property type="entry name" value="PRK04164.1-5"/>
    <property type="match status" value="1"/>
</dbReference>
<dbReference type="PANTHER" id="PTHR40060">
    <property type="entry name" value="UPF0316 PROTEIN YEBE"/>
    <property type="match status" value="1"/>
</dbReference>
<dbReference type="PANTHER" id="PTHR40060:SF1">
    <property type="entry name" value="UPF0316 PROTEIN YEBE"/>
    <property type="match status" value="1"/>
</dbReference>
<dbReference type="Pfam" id="PF10035">
    <property type="entry name" value="DUF2179"/>
    <property type="match status" value="1"/>
</dbReference>
<dbReference type="Pfam" id="PF18955">
    <property type="entry name" value="DUF5698"/>
    <property type="match status" value="1"/>
</dbReference>
<reference key="1">
    <citation type="journal article" date="2008" name="J. Bacteriol.">
        <title>Genome sequence of Staphylococcus aureus strain Newman and comparative analysis of staphylococcal genomes: polymorphism and evolution of two major pathogenicity islands.</title>
        <authorList>
            <person name="Baba T."/>
            <person name="Bae T."/>
            <person name="Schneewind O."/>
            <person name="Takeuchi F."/>
            <person name="Hiramatsu K."/>
        </authorList>
    </citation>
    <scope>NUCLEOTIDE SEQUENCE [LARGE SCALE GENOMIC DNA]</scope>
    <source>
        <strain>Newman</strain>
    </source>
</reference>
<accession>A6QID9</accession>
<name>Y1849_STAAE</name>